<sequence>MNEVYVIAGGEWLRNNLNAIAAFMGTWTWDSIEKIALTLSVLAVAVMWVQRHNVMDLLGWVAVFVLISLLVNVRTSVQIIDNSDLVKVHRVDNVPVGLAMPLSLTTRIGHAMVASYEMIFTQPDSVTYSKTGMLFGANLIVKSTDFLSRNPEIINLFQDYVQNCVLGDIYLNHKYTLEDLMASADPYTLIFSRPSPLRGVYDNNNNFITCKDASVTLKDRLNLDTKTGGKTWHYYVQQIFGGRPDPDLLFRQLVSDSYSYFYGSSQSASQIMRQNVTMNALKEGITSNAARNGDTASLVSLATTSSMEKQRLAHVSIGHVTMRNLPMVQTILTGIAIGIFPLLILAAVFNKLTLSVLKGYVFALMWLQTWPLLYAILNSAMTFYAKQNGAPVVLSELSQIQLKYSNLASTAGYLSAMIPPLSWMMVKGLGAGFSSVYSHFASSSISPTASAAGSVVDGNYSYGNMQTENVNGFSWSTNSTTSFGQMMYQTGSGATATQTRDGNMVMDASGAMSRLPVGINATRQIAAAQQEMAREASNRAESALHGFSSSIASAWNTLSQFGSNRGSSDSVTGGADSTMSAQDSMMASRMRSAVESYAKAHNISNEQATRELASRSTNASLGLYGDAYAKGHLGISVLGNGGGVGLQAGAKASIDGSDLDSHEASSGSRASHDARHDIDARATQDFKEASDYFTSRKVSESGSHTDNNADSRVDQLSAALNSAKQSYDQYTTNMTRSHEYAEMASRTESMSGQMSEDLSQQFAQYVMKNAPQDVEAILTNTSSPEIAERRRAMAWSFVQEQVQPGVDNTWRESRRDIGKGMESVPSGGGSQDIIADHQGHQAIIEQRTQDSNIRNDVKHQVDNMVTEYRGNIGDTQNSIRGEENIVKGQYSELQNHHKTEALTQNNKYNEEKLAQERIPGADSPKELLEKAKSYQHKE</sequence>
<organism>
    <name type="scientific">Escherichia coli (strain K12)</name>
    <dbReference type="NCBI Taxonomy" id="83333"/>
    <lineage>
        <taxon>Bacteria</taxon>
        <taxon>Pseudomonadati</taxon>
        <taxon>Pseudomonadota</taxon>
        <taxon>Gammaproteobacteria</taxon>
        <taxon>Enterobacterales</taxon>
        <taxon>Enterobacteriaceae</taxon>
        <taxon>Escherichia</taxon>
    </lineage>
</organism>
<geneLocation type="plasmid">
    <name>F</name>
</geneLocation>
<proteinExistence type="predicted"/>
<keyword id="KW-0997">Cell inner membrane</keyword>
<keyword id="KW-1003">Cell membrane</keyword>
<keyword id="KW-0184">Conjugation</keyword>
<keyword id="KW-0472">Membrane</keyword>
<keyword id="KW-0614">Plasmid</keyword>
<keyword id="KW-0812">Transmembrane</keyword>
<keyword id="KW-1133">Transmembrane helix</keyword>
<feature type="chain" id="PRO_0000024501" description="Protein TraG">
    <location>
        <begin position="1"/>
        <end position="938"/>
    </location>
</feature>
<feature type="chain" id="PRO_0000024502" description="Protein TraG*">
    <location>
        <begin status="unknown"/>
        <end position="938"/>
    </location>
</feature>
<feature type="topological domain" description="Cytoplasmic" evidence="1">
    <location>
        <begin position="1"/>
        <end position="53"/>
    </location>
</feature>
<feature type="transmembrane region" description="Helical" evidence="1">
    <location>
        <begin position="54"/>
        <end position="73"/>
    </location>
</feature>
<feature type="topological domain" description="Periplasmic" evidence="1">
    <location>
        <begin position="74"/>
        <end position="329"/>
    </location>
</feature>
<feature type="transmembrane region" description="Helical" evidence="1">
    <location>
        <begin position="330"/>
        <end position="350"/>
    </location>
</feature>
<feature type="topological domain" description="Cytoplasmic" evidence="1">
    <location>
        <begin position="351"/>
        <end position="412"/>
    </location>
</feature>
<feature type="transmembrane region" description="Helical" evidence="1">
    <location>
        <begin position="413"/>
        <end position="433"/>
    </location>
</feature>
<feature type="topological domain" description="Periplasmic" evidence="1">
    <location>
        <begin position="434"/>
        <end position="938"/>
    </location>
</feature>
<feature type="region of interest" description="Disordered" evidence="2">
    <location>
        <begin position="654"/>
        <end position="677"/>
    </location>
</feature>
<feature type="region of interest" description="Disordered" evidence="2">
    <location>
        <begin position="915"/>
        <end position="938"/>
    </location>
</feature>
<feature type="compositionally biased region" description="Basic and acidic residues" evidence="2">
    <location>
        <begin position="923"/>
        <end position="938"/>
    </location>
</feature>
<name>TRAG1_ECOLI</name>
<gene>
    <name type="primary">traG</name>
    <name type="ordered locus">ECOK12F099</name>
</gene>
<dbReference type="EMBL" id="M59763">
    <property type="protein sequence ID" value="AAA98081.1"/>
    <property type="molecule type" value="Genomic_DNA"/>
</dbReference>
<dbReference type="EMBL" id="U01159">
    <property type="protein sequence ID" value="AAC44184.1"/>
    <property type="molecule type" value="Genomic_DNA"/>
</dbReference>
<dbReference type="EMBL" id="AP001918">
    <property type="protein sequence ID" value="BAA97969.1"/>
    <property type="molecule type" value="Genomic_DNA"/>
</dbReference>
<dbReference type="PIR" id="S20480">
    <property type="entry name" value="S20480"/>
</dbReference>
<dbReference type="RefSeq" id="NP_061478.1">
    <property type="nucleotide sequence ID" value="NC_002483.1"/>
</dbReference>
<dbReference type="RefSeq" id="WP_001007055.1">
    <property type="nucleotide sequence ID" value="NC_002483.1"/>
</dbReference>
<dbReference type="KEGG" id="ecoc:C3026_24595"/>
<dbReference type="PATRIC" id="fig|83333.107.peg.613"/>
<dbReference type="OrthoDB" id="5555296at2"/>
<dbReference type="GO" id="GO:0005886">
    <property type="term" value="C:plasma membrane"/>
    <property type="evidence" value="ECO:0007669"/>
    <property type="project" value="UniProtKB-SubCell"/>
</dbReference>
<dbReference type="InterPro" id="IPR012931">
    <property type="entry name" value="TraG_N_Proteobacteria"/>
</dbReference>
<dbReference type="NCBIfam" id="NF010295">
    <property type="entry name" value="PRK13735.1"/>
    <property type="match status" value="1"/>
</dbReference>
<dbReference type="Pfam" id="PF07916">
    <property type="entry name" value="TraG_N"/>
    <property type="match status" value="1"/>
</dbReference>
<accession>P33790</accession>
<evidence type="ECO:0000255" key="1"/>
<evidence type="ECO:0000256" key="2">
    <source>
        <dbReference type="SAM" id="MobiDB-lite"/>
    </source>
</evidence>
<evidence type="ECO:0000305" key="3"/>
<comment type="function">
    <text>Plays a crucial role in donor-recipient cell interactions. Required for two stages of the conjugation process: pilus biosynthesis and mating aggregate stabilization. May interact with TraN.</text>
</comment>
<comment type="subcellular location">
    <subcellularLocation>
        <location>Cell inner membrane</location>
        <topology>Multi-pass membrane protein</topology>
    </subcellularLocation>
</comment>
<comment type="PTM">
    <text>TraG* probably arises from the post-translational cleavage of TraG.</text>
</comment>
<comment type="caution">
    <text evidence="3">TraG is not responsible for the N-terminal acetylation of F pilin as stated by some authors.</text>
</comment>
<reference key="1">
    <citation type="journal article" date="1992" name="Mol. Gen. Genet.">
        <title>Characterization of the F plasmid bifunctional conjugation gene, traG.</title>
        <authorList>
            <person name="Firth N."/>
            <person name="Skurray R.A."/>
        </authorList>
    </citation>
    <scope>NUCLEOTIDE SEQUENCE [GENOMIC DNA]</scope>
    <source>
        <strain>K12</strain>
    </source>
</reference>
<reference key="2">
    <citation type="journal article" date="1994" name="Microbiol. Rev.">
        <title>Analysis of the sequence and gene products of the transfer region of the F sex factor.</title>
        <authorList>
            <person name="Frost L.S."/>
            <person name="Ippen-Ihler K."/>
            <person name="Skurray R.A."/>
        </authorList>
    </citation>
    <scope>NUCLEOTIDE SEQUENCE [GENOMIC DNA]</scope>
</reference>
<reference key="3">
    <citation type="submission" date="2000-04" db="EMBL/GenBank/DDBJ databases">
        <title>Complete nucleotide sequence of the F plasmid: its implications for organization and diversification of plasmid genomes.</title>
        <authorList>
            <person name="Shimizu H."/>
            <person name="Saitoh Y."/>
            <person name="Suda Y."/>
            <person name="Uehara K."/>
            <person name="Sampei G."/>
            <person name="Mizobuchi K."/>
        </authorList>
    </citation>
    <scope>NUCLEOTIDE SEQUENCE [LARGE SCALE GENOMIC DNA]</scope>
    <source>
        <strain>K12 / CR63</strain>
    </source>
</reference>
<protein>
    <recommendedName>
        <fullName>Protein TraG</fullName>
    </recommendedName>
    <component>
        <recommendedName>
            <fullName>Protein TraG*</fullName>
        </recommendedName>
    </component>
</protein>